<accession>Q5HFP9</accession>
<sequence>MTKETQSFEEMMQELEQIVQKLDNETVSLEESLDLYQRGMKLSAACDTTLKNAEKKVNDLIKEEAEDVKNDESTDE</sequence>
<organism>
    <name type="scientific">Staphylococcus aureus (strain COL)</name>
    <dbReference type="NCBI Taxonomy" id="93062"/>
    <lineage>
        <taxon>Bacteria</taxon>
        <taxon>Bacillati</taxon>
        <taxon>Bacillota</taxon>
        <taxon>Bacilli</taxon>
        <taxon>Bacillales</taxon>
        <taxon>Staphylococcaceae</taxon>
        <taxon>Staphylococcus</taxon>
    </lineage>
</organism>
<protein>
    <recommendedName>
        <fullName evidence="1">Exodeoxyribonuclease 7 small subunit</fullName>
        <ecNumber evidence="1">3.1.11.6</ecNumber>
    </recommendedName>
    <alternativeName>
        <fullName evidence="1">Exodeoxyribonuclease VII small subunit</fullName>
        <shortName evidence="1">Exonuclease VII small subunit</shortName>
    </alternativeName>
</protein>
<feature type="chain" id="PRO_0000207003" description="Exodeoxyribonuclease 7 small subunit">
    <location>
        <begin position="1"/>
        <end position="76"/>
    </location>
</feature>
<comment type="function">
    <text evidence="1">Bidirectionally degrades single-stranded DNA into large acid-insoluble oligonucleotides, which are then degraded further into small acid-soluble oligonucleotides.</text>
</comment>
<comment type="catalytic activity">
    <reaction evidence="1">
        <text>Exonucleolytic cleavage in either 5'- to 3'- or 3'- to 5'-direction to yield nucleoside 5'-phosphates.</text>
        <dbReference type="EC" id="3.1.11.6"/>
    </reaction>
</comment>
<comment type="subunit">
    <text evidence="1">Heterooligomer composed of large and small subunits.</text>
</comment>
<comment type="subcellular location">
    <subcellularLocation>
        <location evidence="1">Cytoplasm</location>
    </subcellularLocation>
</comment>
<comment type="similarity">
    <text evidence="1">Belongs to the XseB family.</text>
</comment>
<dbReference type="EC" id="3.1.11.6" evidence="1"/>
<dbReference type="EMBL" id="CP000046">
    <property type="protein sequence ID" value="AAW36759.1"/>
    <property type="molecule type" value="Genomic_DNA"/>
</dbReference>
<dbReference type="RefSeq" id="WP_000159865.1">
    <property type="nucleotide sequence ID" value="NZ_JBGOFO010000003.1"/>
</dbReference>
<dbReference type="SMR" id="Q5HFP9"/>
<dbReference type="KEGG" id="sac:SACOL1567"/>
<dbReference type="HOGENOM" id="CLU_145918_3_2_9"/>
<dbReference type="Proteomes" id="UP000000530">
    <property type="component" value="Chromosome"/>
</dbReference>
<dbReference type="GO" id="GO:0005829">
    <property type="term" value="C:cytosol"/>
    <property type="evidence" value="ECO:0007669"/>
    <property type="project" value="TreeGrafter"/>
</dbReference>
<dbReference type="GO" id="GO:0009318">
    <property type="term" value="C:exodeoxyribonuclease VII complex"/>
    <property type="evidence" value="ECO:0007669"/>
    <property type="project" value="InterPro"/>
</dbReference>
<dbReference type="GO" id="GO:0008855">
    <property type="term" value="F:exodeoxyribonuclease VII activity"/>
    <property type="evidence" value="ECO:0007669"/>
    <property type="project" value="UniProtKB-UniRule"/>
</dbReference>
<dbReference type="GO" id="GO:0006308">
    <property type="term" value="P:DNA catabolic process"/>
    <property type="evidence" value="ECO:0007669"/>
    <property type="project" value="UniProtKB-UniRule"/>
</dbReference>
<dbReference type="FunFam" id="1.10.287.1040:FF:000006">
    <property type="entry name" value="Exodeoxyribonuclease 7 small subunit"/>
    <property type="match status" value="1"/>
</dbReference>
<dbReference type="Gene3D" id="1.10.287.1040">
    <property type="entry name" value="Exonuclease VII, small subunit"/>
    <property type="match status" value="1"/>
</dbReference>
<dbReference type="HAMAP" id="MF_00337">
    <property type="entry name" value="Exonuc_7_S"/>
    <property type="match status" value="1"/>
</dbReference>
<dbReference type="InterPro" id="IPR003761">
    <property type="entry name" value="Exonuc_VII_S"/>
</dbReference>
<dbReference type="InterPro" id="IPR037004">
    <property type="entry name" value="Exonuc_VII_ssu_sf"/>
</dbReference>
<dbReference type="NCBIfam" id="NF002140">
    <property type="entry name" value="PRK00977.1-4"/>
    <property type="match status" value="1"/>
</dbReference>
<dbReference type="NCBIfam" id="NF010671">
    <property type="entry name" value="PRK14068.1"/>
    <property type="match status" value="1"/>
</dbReference>
<dbReference type="NCBIfam" id="TIGR01280">
    <property type="entry name" value="xseB"/>
    <property type="match status" value="1"/>
</dbReference>
<dbReference type="PANTHER" id="PTHR34137">
    <property type="entry name" value="EXODEOXYRIBONUCLEASE 7 SMALL SUBUNIT"/>
    <property type="match status" value="1"/>
</dbReference>
<dbReference type="PANTHER" id="PTHR34137:SF1">
    <property type="entry name" value="EXODEOXYRIBONUCLEASE 7 SMALL SUBUNIT"/>
    <property type="match status" value="1"/>
</dbReference>
<dbReference type="Pfam" id="PF02609">
    <property type="entry name" value="Exonuc_VII_S"/>
    <property type="match status" value="1"/>
</dbReference>
<dbReference type="PIRSF" id="PIRSF006488">
    <property type="entry name" value="Exonuc_VII_S"/>
    <property type="match status" value="1"/>
</dbReference>
<dbReference type="SUPFAM" id="SSF116842">
    <property type="entry name" value="XseB-like"/>
    <property type="match status" value="1"/>
</dbReference>
<proteinExistence type="inferred from homology"/>
<name>EX7S_STAAC</name>
<reference key="1">
    <citation type="journal article" date="2005" name="J. Bacteriol.">
        <title>Insights on evolution of virulence and resistance from the complete genome analysis of an early methicillin-resistant Staphylococcus aureus strain and a biofilm-producing methicillin-resistant Staphylococcus epidermidis strain.</title>
        <authorList>
            <person name="Gill S.R."/>
            <person name="Fouts D.E."/>
            <person name="Archer G.L."/>
            <person name="Mongodin E.F."/>
            <person name="DeBoy R.T."/>
            <person name="Ravel J."/>
            <person name="Paulsen I.T."/>
            <person name="Kolonay J.F."/>
            <person name="Brinkac L.M."/>
            <person name="Beanan M.J."/>
            <person name="Dodson R.J."/>
            <person name="Daugherty S.C."/>
            <person name="Madupu R."/>
            <person name="Angiuoli S.V."/>
            <person name="Durkin A.S."/>
            <person name="Haft D.H."/>
            <person name="Vamathevan J.J."/>
            <person name="Khouri H."/>
            <person name="Utterback T.R."/>
            <person name="Lee C."/>
            <person name="Dimitrov G."/>
            <person name="Jiang L."/>
            <person name="Qin H."/>
            <person name="Weidman J."/>
            <person name="Tran K."/>
            <person name="Kang K.H."/>
            <person name="Hance I.R."/>
            <person name="Nelson K.E."/>
            <person name="Fraser C.M."/>
        </authorList>
    </citation>
    <scope>NUCLEOTIDE SEQUENCE [LARGE SCALE GENOMIC DNA]</scope>
    <source>
        <strain>COL</strain>
    </source>
</reference>
<gene>
    <name evidence="1" type="primary">xseB</name>
    <name type="ordered locus">SACOL1567</name>
</gene>
<keyword id="KW-0963">Cytoplasm</keyword>
<keyword id="KW-0269">Exonuclease</keyword>
<keyword id="KW-0378">Hydrolase</keyword>
<keyword id="KW-0540">Nuclease</keyword>
<evidence type="ECO:0000255" key="1">
    <source>
        <dbReference type="HAMAP-Rule" id="MF_00337"/>
    </source>
</evidence>